<organism>
    <name type="scientific">Oncorhynchus mykiss</name>
    <name type="common">Rainbow trout</name>
    <name type="synonym">Salmo gairdneri</name>
    <dbReference type="NCBI Taxonomy" id="8022"/>
    <lineage>
        <taxon>Eukaryota</taxon>
        <taxon>Metazoa</taxon>
        <taxon>Chordata</taxon>
        <taxon>Craniata</taxon>
        <taxon>Vertebrata</taxon>
        <taxon>Euteleostomi</taxon>
        <taxon>Actinopterygii</taxon>
        <taxon>Neopterygii</taxon>
        <taxon>Teleostei</taxon>
        <taxon>Protacanthopterygii</taxon>
        <taxon>Salmoniformes</taxon>
        <taxon>Salmonidae</taxon>
        <taxon>Salmoninae</taxon>
        <taxon>Oncorhynchus</taxon>
    </lineage>
</organism>
<gene>
    <name evidence="2" type="primary">selenof</name>
    <name evidence="5" type="synonym">sep15</name>
</gene>
<keyword id="KW-0256">Endoplasmic reticulum</keyword>
<keyword id="KW-0712">Selenocysteine</keyword>
<keyword id="KW-0732">Signal</keyword>
<proteinExistence type="evidence at transcript level"/>
<feature type="signal peptide" evidence="3">
    <location>
        <begin position="1"/>
        <end position="19"/>
    </location>
</feature>
<feature type="chain" id="PRO_0000022309" description="Selenoprotein F" evidence="3">
    <location>
        <begin position="20"/>
        <end position="157"/>
    </location>
</feature>
<feature type="non-standard amino acid" description="Selenocysteine" evidence="5">
    <location>
        <position position="84"/>
    </location>
</feature>
<comment type="function">
    <text evidence="1 4">May be involved in redox reactions associated with the formation of disulfide bonds. May contribute to the quality control of protein folding in the endoplasmic reticulum (By similarity). May be involved in retinal development.</text>
</comment>
<comment type="subcellular location">
    <subcellularLocation>
        <location evidence="1">Endoplasmic reticulum lumen</location>
    </subcellularLocation>
</comment>
<comment type="tissue specificity">
    <text evidence="4">Expressed in the brain, liver and retina. Localized to the retinal ganglion cell layer, the inner nuclear layer and the outer nuclear layer at both parr and smolt stages.</text>
</comment>
<comment type="similarity">
    <text evidence="6">Belongs to the selenoprotein M/F family.</text>
</comment>
<evidence type="ECO:0000250" key="1"/>
<evidence type="ECO:0000250" key="2">
    <source>
        <dbReference type="UniProtKB" id="O60613"/>
    </source>
</evidence>
<evidence type="ECO:0000255" key="3"/>
<evidence type="ECO:0000269" key="4">
    <source>
    </source>
</evidence>
<evidence type="ECO:0000303" key="5">
    <source>
    </source>
</evidence>
<evidence type="ECO:0000305" key="6"/>
<evidence type="ECO:0000312" key="7">
    <source>
        <dbReference type="EMBL" id="AAP94226.1"/>
    </source>
</evidence>
<reference evidence="6 7" key="1">
    <citation type="journal article" date="2003" name="Comp. Biochem. Physiol.">
        <title>Identification of a unique transcript down-regulated in the retina of rainbow trout (Oncorhynchus mykiss) at smoltification.</title>
        <authorList>
            <person name="Dann S.G."/>
            <person name="Allison W.T."/>
            <person name="Levin D.B."/>
            <person name="Hawryshyn C.W."/>
        </authorList>
    </citation>
    <scope>NUCLEOTIDE SEQUENCE [MRNA]</scope>
    <scope>FUNCTION</scope>
    <scope>TISSUE SPECIFICITY</scope>
    <source>
        <tissue evidence="4">Retina</tissue>
    </source>
</reference>
<sequence length="157" mass="17590">MSGEVYILWLLSLIQTLSAYGADLSSEACRELGFSSCWGCSSCDLLGEFSLSSIQPVCKQCCQQEVHMESRKLYPGAILEVCGUKLGRFPQVQAFVRSDKPKMFKGLQIKYVRGADPILKLLDDNGNIAEEPSILKWNTDSVEEFLSEKLEVYNTDL</sequence>
<name>SEP15_ONCMY</name>
<dbReference type="EMBL" id="AY255833">
    <property type="protein sequence ID" value="AAP94226.1"/>
    <property type="molecule type" value="mRNA"/>
</dbReference>
<dbReference type="RefSeq" id="NP_001117926.1">
    <property type="nucleotide sequence ID" value="NM_001124454.1"/>
</dbReference>
<dbReference type="GeneID" id="110530087"/>
<dbReference type="KEGG" id="omy:110530087"/>
<dbReference type="CTD" id="9403"/>
<dbReference type="OrthoDB" id="1910009at2759"/>
<dbReference type="Proteomes" id="UP000694395">
    <property type="component" value="Unplaced"/>
</dbReference>
<dbReference type="GO" id="GO:0005788">
    <property type="term" value="C:endoplasmic reticulum lumen"/>
    <property type="evidence" value="ECO:0000250"/>
    <property type="project" value="UniProtKB"/>
</dbReference>
<dbReference type="GO" id="GO:0016491">
    <property type="term" value="F:oxidoreductase activity"/>
    <property type="evidence" value="ECO:0007669"/>
    <property type="project" value="TreeGrafter"/>
</dbReference>
<dbReference type="FunFam" id="3.40.30.50:FF:000001">
    <property type="entry name" value="15 kDa selenoprotein"/>
    <property type="match status" value="1"/>
</dbReference>
<dbReference type="Gene3D" id="3.40.30.50">
    <property type="entry name" value="Sep15/SelM thioredoxin-like domain, active-site redox motif"/>
    <property type="match status" value="1"/>
</dbReference>
<dbReference type="InterPro" id="IPR038219">
    <property type="entry name" value="Sep15/SelM_sf"/>
</dbReference>
<dbReference type="InterPro" id="IPR039992">
    <property type="entry name" value="Sep15_SelM"/>
</dbReference>
<dbReference type="InterPro" id="IPR014912">
    <property type="entry name" value="Sep15_SelM_dom"/>
</dbReference>
<dbReference type="InterPro" id="IPR036249">
    <property type="entry name" value="Thioredoxin-like_sf"/>
</dbReference>
<dbReference type="PANTHER" id="PTHR13077">
    <property type="entry name" value="SELENOPROTEIN F"/>
    <property type="match status" value="1"/>
</dbReference>
<dbReference type="PANTHER" id="PTHR13077:SF6">
    <property type="entry name" value="SELENOPROTEIN F"/>
    <property type="match status" value="1"/>
</dbReference>
<dbReference type="Pfam" id="PF08806">
    <property type="entry name" value="Sep15_SelM"/>
    <property type="match status" value="1"/>
</dbReference>
<dbReference type="SUPFAM" id="SSF52833">
    <property type="entry name" value="Thioredoxin-like"/>
    <property type="match status" value="1"/>
</dbReference>
<protein>
    <recommendedName>
        <fullName evidence="2">Selenoprotein F</fullName>
    </recommendedName>
</protein>
<accession>Q6X4M2</accession>